<organism>
    <name type="scientific">Streptococcus pneumoniae (strain CGSP14)</name>
    <dbReference type="NCBI Taxonomy" id="516950"/>
    <lineage>
        <taxon>Bacteria</taxon>
        <taxon>Bacillati</taxon>
        <taxon>Bacillota</taxon>
        <taxon>Bacilli</taxon>
        <taxon>Lactobacillales</taxon>
        <taxon>Streptococcaceae</taxon>
        <taxon>Streptococcus</taxon>
    </lineage>
</organism>
<feature type="chain" id="PRO_1000144492" description="Large ribosomal subunit protein bL17">
    <location>
        <begin position="1"/>
        <end position="128"/>
    </location>
</feature>
<accession>B2IS68</accession>
<reference key="1">
    <citation type="journal article" date="2009" name="BMC Genomics">
        <title>Genome evolution driven by host adaptations results in a more virulent and antimicrobial-resistant Streptococcus pneumoniae serotype 14.</title>
        <authorList>
            <person name="Ding F."/>
            <person name="Tang P."/>
            <person name="Hsu M.-H."/>
            <person name="Cui P."/>
            <person name="Hu S."/>
            <person name="Yu J."/>
            <person name="Chiu C.-H."/>
        </authorList>
    </citation>
    <scope>NUCLEOTIDE SEQUENCE [LARGE SCALE GENOMIC DNA]</scope>
    <source>
        <strain>CGSP14</strain>
    </source>
</reference>
<proteinExistence type="inferred from homology"/>
<dbReference type="EMBL" id="CP001033">
    <property type="protein sequence ID" value="ACB89496.1"/>
    <property type="molecule type" value="Genomic_DNA"/>
</dbReference>
<dbReference type="RefSeq" id="WP_000331493.1">
    <property type="nucleotide sequence ID" value="NC_010582.1"/>
</dbReference>
<dbReference type="SMR" id="B2IS68"/>
<dbReference type="GeneID" id="93738984"/>
<dbReference type="KEGG" id="spw:SPCG_0244"/>
<dbReference type="HOGENOM" id="CLU_074407_2_2_9"/>
<dbReference type="GO" id="GO:0022625">
    <property type="term" value="C:cytosolic large ribosomal subunit"/>
    <property type="evidence" value="ECO:0007669"/>
    <property type="project" value="TreeGrafter"/>
</dbReference>
<dbReference type="GO" id="GO:0003735">
    <property type="term" value="F:structural constituent of ribosome"/>
    <property type="evidence" value="ECO:0007669"/>
    <property type="project" value="InterPro"/>
</dbReference>
<dbReference type="GO" id="GO:0006412">
    <property type="term" value="P:translation"/>
    <property type="evidence" value="ECO:0007669"/>
    <property type="project" value="UniProtKB-UniRule"/>
</dbReference>
<dbReference type="FunFam" id="3.90.1030.10:FF:000002">
    <property type="entry name" value="50S ribosomal protein L17"/>
    <property type="match status" value="1"/>
</dbReference>
<dbReference type="Gene3D" id="3.90.1030.10">
    <property type="entry name" value="Ribosomal protein L17"/>
    <property type="match status" value="1"/>
</dbReference>
<dbReference type="HAMAP" id="MF_01368">
    <property type="entry name" value="Ribosomal_bL17"/>
    <property type="match status" value="1"/>
</dbReference>
<dbReference type="InterPro" id="IPR000456">
    <property type="entry name" value="Ribosomal_bL17"/>
</dbReference>
<dbReference type="InterPro" id="IPR047859">
    <property type="entry name" value="Ribosomal_bL17_CS"/>
</dbReference>
<dbReference type="InterPro" id="IPR036373">
    <property type="entry name" value="Ribosomal_bL17_sf"/>
</dbReference>
<dbReference type="NCBIfam" id="TIGR00059">
    <property type="entry name" value="L17"/>
    <property type="match status" value="1"/>
</dbReference>
<dbReference type="PANTHER" id="PTHR14413:SF16">
    <property type="entry name" value="LARGE RIBOSOMAL SUBUNIT PROTEIN BL17M"/>
    <property type="match status" value="1"/>
</dbReference>
<dbReference type="PANTHER" id="PTHR14413">
    <property type="entry name" value="RIBOSOMAL PROTEIN L17"/>
    <property type="match status" value="1"/>
</dbReference>
<dbReference type="Pfam" id="PF01196">
    <property type="entry name" value="Ribosomal_L17"/>
    <property type="match status" value="1"/>
</dbReference>
<dbReference type="SUPFAM" id="SSF64263">
    <property type="entry name" value="Prokaryotic ribosomal protein L17"/>
    <property type="match status" value="1"/>
</dbReference>
<dbReference type="PROSITE" id="PS01167">
    <property type="entry name" value="RIBOSOMAL_L17"/>
    <property type="match status" value="1"/>
</dbReference>
<gene>
    <name evidence="1" type="primary">rplQ</name>
    <name type="ordered locus">SPCG_0244</name>
</gene>
<keyword id="KW-0687">Ribonucleoprotein</keyword>
<keyword id="KW-0689">Ribosomal protein</keyword>
<protein>
    <recommendedName>
        <fullName evidence="1">Large ribosomal subunit protein bL17</fullName>
    </recommendedName>
    <alternativeName>
        <fullName evidence="2">50S ribosomal protein L17</fullName>
    </alternativeName>
</protein>
<comment type="subunit">
    <text evidence="1">Part of the 50S ribosomal subunit. Contacts protein L32.</text>
</comment>
<comment type="similarity">
    <text evidence="1">Belongs to the bacterial ribosomal protein bL17 family.</text>
</comment>
<name>RL17_STRPS</name>
<evidence type="ECO:0000255" key="1">
    <source>
        <dbReference type="HAMAP-Rule" id="MF_01368"/>
    </source>
</evidence>
<evidence type="ECO:0000305" key="2"/>
<sequence>MAYRKLGRTSSQRKAMLRDLTTDLLINESIVTTEARAKEIRKTVEKMITLGKRGDLHARRQAAAFVRNEIASENYDEATDKYTSTTALQKLFSEIAPRYAERNGGYTRILKTEPRRGDAAPMAIIELV</sequence>